<reference key="1">
    <citation type="submission" date="2008-02" db="EMBL/GenBank/DDBJ databases">
        <title>Complete sequence of Pseudomonas putida W619.</title>
        <authorList>
            <person name="Copeland A."/>
            <person name="Lucas S."/>
            <person name="Lapidus A."/>
            <person name="Barry K."/>
            <person name="Detter J.C."/>
            <person name="Glavina del Rio T."/>
            <person name="Dalin E."/>
            <person name="Tice H."/>
            <person name="Pitluck S."/>
            <person name="Chain P."/>
            <person name="Malfatti S."/>
            <person name="Shin M."/>
            <person name="Vergez L."/>
            <person name="Schmutz J."/>
            <person name="Larimer F."/>
            <person name="Land M."/>
            <person name="Hauser L."/>
            <person name="Kyrpides N."/>
            <person name="Kim E."/>
            <person name="Taghavi S."/>
            <person name="Vangronsveld D."/>
            <person name="van der Lelie D."/>
            <person name="Richardson P."/>
        </authorList>
    </citation>
    <scope>NUCLEOTIDE SEQUENCE [LARGE SCALE GENOMIC DNA]</scope>
    <source>
        <strain>W619</strain>
    </source>
</reference>
<keyword id="KW-0997">Cell inner membrane</keyword>
<keyword id="KW-1003">Cell membrane</keyword>
<keyword id="KW-0378">Hydrolase</keyword>
<keyword id="KW-0441">Lipid A biosynthesis</keyword>
<keyword id="KW-0444">Lipid biosynthesis</keyword>
<keyword id="KW-0443">Lipid metabolism</keyword>
<keyword id="KW-0464">Manganese</keyword>
<keyword id="KW-0472">Membrane</keyword>
<keyword id="KW-0479">Metal-binding</keyword>
<accession>B1J842</accession>
<name>LPXH_PSEPW</name>
<sequence>MILLISDLHLQEERPDITRAFLDLLDGRARHAKALYILGDFFEAWIGDDAMTPFQQSICQAVRQLSDSGTAVYLMHGNRDFLIGEGFCKAAGCTLLADPSVISLGGEQVLLMHGDTLCTRDIGYMKMRRYLRNPLSLWILRHLPLATRQKLARKLRSESRAQTRMKATEIVDVTPEEVPAVMAAHGVKTLVHGHTHRPAIHKLVVNGEPARRIVLGDWDRRGWTLQVDAQGFQLEPFEFS</sequence>
<feature type="chain" id="PRO_1000129529" description="UDP-2,3-diacylglucosamine hydrolase">
    <location>
        <begin position="1"/>
        <end position="240"/>
    </location>
</feature>
<feature type="binding site" evidence="1">
    <location>
        <position position="7"/>
    </location>
    <ligand>
        <name>Mn(2+)</name>
        <dbReference type="ChEBI" id="CHEBI:29035"/>
        <label>1</label>
    </ligand>
</feature>
<feature type="binding site" evidence="1">
    <location>
        <position position="9"/>
    </location>
    <ligand>
        <name>Mn(2+)</name>
        <dbReference type="ChEBI" id="CHEBI:29035"/>
        <label>1</label>
    </ligand>
</feature>
<feature type="binding site" evidence="1">
    <location>
        <position position="40"/>
    </location>
    <ligand>
        <name>Mn(2+)</name>
        <dbReference type="ChEBI" id="CHEBI:29035"/>
        <label>1</label>
    </ligand>
</feature>
<feature type="binding site" evidence="1">
    <location>
        <position position="40"/>
    </location>
    <ligand>
        <name>Mn(2+)</name>
        <dbReference type="ChEBI" id="CHEBI:29035"/>
        <label>2</label>
    </ligand>
</feature>
<feature type="binding site" evidence="1">
    <location>
        <begin position="78"/>
        <end position="79"/>
    </location>
    <ligand>
        <name>substrate</name>
    </ligand>
</feature>
<feature type="binding site" evidence="1">
    <location>
        <position position="78"/>
    </location>
    <ligand>
        <name>Mn(2+)</name>
        <dbReference type="ChEBI" id="CHEBI:29035"/>
        <label>2</label>
    </ligand>
</feature>
<feature type="binding site" evidence="1">
    <location>
        <position position="113"/>
    </location>
    <ligand>
        <name>Mn(2+)</name>
        <dbReference type="ChEBI" id="CHEBI:29035"/>
        <label>2</label>
    </ligand>
</feature>
<feature type="binding site" evidence="1">
    <location>
        <position position="121"/>
    </location>
    <ligand>
        <name>substrate</name>
    </ligand>
</feature>
<feature type="binding site" evidence="1">
    <location>
        <position position="159"/>
    </location>
    <ligand>
        <name>substrate</name>
    </ligand>
</feature>
<feature type="binding site" evidence="1">
    <location>
        <position position="163"/>
    </location>
    <ligand>
        <name>substrate</name>
    </ligand>
</feature>
<feature type="binding site" evidence="1">
    <location>
        <position position="166"/>
    </location>
    <ligand>
        <name>substrate</name>
    </ligand>
</feature>
<feature type="binding site" evidence="1">
    <location>
        <position position="194"/>
    </location>
    <ligand>
        <name>Mn(2+)</name>
        <dbReference type="ChEBI" id="CHEBI:29035"/>
        <label>2</label>
    </ligand>
</feature>
<feature type="binding site" evidence="1">
    <location>
        <position position="194"/>
    </location>
    <ligand>
        <name>substrate</name>
    </ligand>
</feature>
<feature type="binding site" evidence="1">
    <location>
        <position position="196"/>
    </location>
    <ligand>
        <name>Mn(2+)</name>
        <dbReference type="ChEBI" id="CHEBI:29035"/>
        <label>1</label>
    </ligand>
</feature>
<evidence type="ECO:0000255" key="1">
    <source>
        <dbReference type="HAMAP-Rule" id="MF_00575"/>
    </source>
</evidence>
<organism>
    <name type="scientific">Pseudomonas putida (strain W619)</name>
    <dbReference type="NCBI Taxonomy" id="390235"/>
    <lineage>
        <taxon>Bacteria</taxon>
        <taxon>Pseudomonadati</taxon>
        <taxon>Pseudomonadota</taxon>
        <taxon>Gammaproteobacteria</taxon>
        <taxon>Pseudomonadales</taxon>
        <taxon>Pseudomonadaceae</taxon>
        <taxon>Pseudomonas</taxon>
    </lineage>
</organism>
<protein>
    <recommendedName>
        <fullName evidence="1">UDP-2,3-diacylglucosamine hydrolase</fullName>
        <ecNumber evidence="1">3.6.1.54</ecNumber>
    </recommendedName>
    <alternativeName>
        <fullName evidence="1">UDP-2,3-diacylglucosamine diphosphatase</fullName>
    </alternativeName>
</protein>
<gene>
    <name evidence="1" type="primary">lpxH</name>
    <name type="ordered locus">PputW619_2404</name>
</gene>
<dbReference type="EC" id="3.6.1.54" evidence="1"/>
<dbReference type="EMBL" id="CP000949">
    <property type="protein sequence ID" value="ACA72904.1"/>
    <property type="molecule type" value="Genomic_DNA"/>
</dbReference>
<dbReference type="SMR" id="B1J842"/>
<dbReference type="STRING" id="390235.PputW619_2404"/>
<dbReference type="KEGG" id="ppw:PputW619_2404"/>
<dbReference type="eggNOG" id="COG2908">
    <property type="taxonomic scope" value="Bacteria"/>
</dbReference>
<dbReference type="HOGENOM" id="CLU_074586_0_0_6"/>
<dbReference type="OrthoDB" id="9783283at2"/>
<dbReference type="UniPathway" id="UPA00359">
    <property type="reaction ID" value="UER00480"/>
</dbReference>
<dbReference type="GO" id="GO:0005737">
    <property type="term" value="C:cytoplasm"/>
    <property type="evidence" value="ECO:0007669"/>
    <property type="project" value="InterPro"/>
</dbReference>
<dbReference type="GO" id="GO:0019897">
    <property type="term" value="C:extrinsic component of plasma membrane"/>
    <property type="evidence" value="ECO:0007669"/>
    <property type="project" value="UniProtKB-UniRule"/>
</dbReference>
<dbReference type="GO" id="GO:0030145">
    <property type="term" value="F:manganese ion binding"/>
    <property type="evidence" value="ECO:0007669"/>
    <property type="project" value="UniProtKB-UniRule"/>
</dbReference>
<dbReference type="GO" id="GO:0008758">
    <property type="term" value="F:UDP-2,3-diacylglucosamine hydrolase activity"/>
    <property type="evidence" value="ECO:0007669"/>
    <property type="project" value="UniProtKB-UniRule"/>
</dbReference>
<dbReference type="GO" id="GO:0009245">
    <property type="term" value="P:lipid A biosynthetic process"/>
    <property type="evidence" value="ECO:0007669"/>
    <property type="project" value="UniProtKB-UniRule"/>
</dbReference>
<dbReference type="CDD" id="cd07398">
    <property type="entry name" value="MPP_YbbF-LpxH"/>
    <property type="match status" value="1"/>
</dbReference>
<dbReference type="Gene3D" id="3.60.21.10">
    <property type="match status" value="1"/>
</dbReference>
<dbReference type="HAMAP" id="MF_00575">
    <property type="entry name" value="LpxH"/>
    <property type="match status" value="1"/>
</dbReference>
<dbReference type="InterPro" id="IPR004843">
    <property type="entry name" value="Calcineurin-like_PHP_ApaH"/>
</dbReference>
<dbReference type="InterPro" id="IPR043461">
    <property type="entry name" value="LpxH-like"/>
</dbReference>
<dbReference type="InterPro" id="IPR029052">
    <property type="entry name" value="Metallo-depent_PP-like"/>
</dbReference>
<dbReference type="InterPro" id="IPR010138">
    <property type="entry name" value="UDP-diacylglucosamine_Hdrlase"/>
</dbReference>
<dbReference type="NCBIfam" id="TIGR01854">
    <property type="entry name" value="lipid_A_lpxH"/>
    <property type="match status" value="1"/>
</dbReference>
<dbReference type="NCBIfam" id="NF003743">
    <property type="entry name" value="PRK05340.1"/>
    <property type="match status" value="1"/>
</dbReference>
<dbReference type="PANTHER" id="PTHR34990:SF1">
    <property type="entry name" value="UDP-2,3-DIACYLGLUCOSAMINE HYDROLASE"/>
    <property type="match status" value="1"/>
</dbReference>
<dbReference type="PANTHER" id="PTHR34990">
    <property type="entry name" value="UDP-2,3-DIACYLGLUCOSAMINE HYDROLASE-RELATED"/>
    <property type="match status" value="1"/>
</dbReference>
<dbReference type="Pfam" id="PF00149">
    <property type="entry name" value="Metallophos"/>
    <property type="match status" value="1"/>
</dbReference>
<dbReference type="SUPFAM" id="SSF56300">
    <property type="entry name" value="Metallo-dependent phosphatases"/>
    <property type="match status" value="1"/>
</dbReference>
<proteinExistence type="inferred from homology"/>
<comment type="function">
    <text evidence="1">Hydrolyzes the pyrophosphate bond of UDP-2,3-diacylglucosamine to yield 2,3-diacylglucosamine 1-phosphate (lipid X) and UMP by catalyzing the attack of water at the alpha-P atom. Involved in the biosynthesis of lipid A, a phosphorylated glycolipid that anchors the lipopolysaccharide to the outer membrane of the cell.</text>
</comment>
<comment type="catalytic activity">
    <reaction evidence="1">
        <text>UDP-2-N,3-O-bis[(3R)-3-hydroxytetradecanoyl]-alpha-D-glucosamine + H2O = 2-N,3-O-bis[(3R)-3-hydroxytetradecanoyl]-alpha-D-glucosaminyl 1-phosphate + UMP + 2 H(+)</text>
        <dbReference type="Rhea" id="RHEA:25213"/>
        <dbReference type="ChEBI" id="CHEBI:15377"/>
        <dbReference type="ChEBI" id="CHEBI:15378"/>
        <dbReference type="ChEBI" id="CHEBI:57865"/>
        <dbReference type="ChEBI" id="CHEBI:57957"/>
        <dbReference type="ChEBI" id="CHEBI:78847"/>
        <dbReference type="EC" id="3.6.1.54"/>
    </reaction>
</comment>
<comment type="cofactor">
    <cofactor evidence="1">
        <name>Mn(2+)</name>
        <dbReference type="ChEBI" id="CHEBI:29035"/>
    </cofactor>
    <text evidence="1">Binds 2 Mn(2+) ions per subunit in a binuclear metal center.</text>
</comment>
<comment type="pathway">
    <text evidence="1">Glycolipid biosynthesis; lipid IV(A) biosynthesis; lipid IV(A) from (3R)-3-hydroxytetradecanoyl-[acyl-carrier-protein] and UDP-N-acetyl-alpha-D-glucosamine: step 4/6.</text>
</comment>
<comment type="subcellular location">
    <subcellularLocation>
        <location evidence="1">Cell inner membrane</location>
        <topology evidence="1">Peripheral membrane protein</topology>
        <orientation evidence="1">Cytoplasmic side</orientation>
    </subcellularLocation>
</comment>
<comment type="similarity">
    <text evidence="1">Belongs to the LpxH family.</text>
</comment>